<reference key="1">
    <citation type="journal article" date="2006" name="Mol. Microbiol.">
        <title>Role of pathogenicity island-associated integrases in the genome plasticity of uropathogenic Escherichia coli strain 536.</title>
        <authorList>
            <person name="Hochhut B."/>
            <person name="Wilde C."/>
            <person name="Balling G."/>
            <person name="Middendorf B."/>
            <person name="Dobrindt U."/>
            <person name="Brzuszkiewicz E."/>
            <person name="Gottschalk G."/>
            <person name="Carniel E."/>
            <person name="Hacker J."/>
        </authorList>
    </citation>
    <scope>NUCLEOTIDE SEQUENCE [LARGE SCALE GENOMIC DNA]</scope>
    <source>
        <strain>536 / UPEC</strain>
    </source>
</reference>
<dbReference type="EC" id="2.7.1.30" evidence="1"/>
<dbReference type="EMBL" id="CP000247">
    <property type="protein sequence ID" value="ABG72091.1"/>
    <property type="molecule type" value="Genomic_DNA"/>
</dbReference>
<dbReference type="RefSeq" id="WP_000136788.1">
    <property type="nucleotide sequence ID" value="NC_008253.1"/>
</dbReference>
<dbReference type="SMR" id="Q0TAD8"/>
<dbReference type="GeneID" id="75169366"/>
<dbReference type="KEGG" id="ecp:ECP_4135"/>
<dbReference type="HOGENOM" id="CLU_009281_2_3_6"/>
<dbReference type="UniPathway" id="UPA00618">
    <property type="reaction ID" value="UER00672"/>
</dbReference>
<dbReference type="Proteomes" id="UP000009182">
    <property type="component" value="Chromosome"/>
</dbReference>
<dbReference type="GO" id="GO:0005829">
    <property type="term" value="C:cytosol"/>
    <property type="evidence" value="ECO:0007669"/>
    <property type="project" value="TreeGrafter"/>
</dbReference>
<dbReference type="GO" id="GO:0005524">
    <property type="term" value="F:ATP binding"/>
    <property type="evidence" value="ECO:0007669"/>
    <property type="project" value="UniProtKB-UniRule"/>
</dbReference>
<dbReference type="GO" id="GO:0004370">
    <property type="term" value="F:glycerol kinase activity"/>
    <property type="evidence" value="ECO:0000250"/>
    <property type="project" value="UniProtKB"/>
</dbReference>
<dbReference type="GO" id="GO:0046872">
    <property type="term" value="F:metal ion binding"/>
    <property type="evidence" value="ECO:0007669"/>
    <property type="project" value="UniProtKB-KW"/>
</dbReference>
<dbReference type="GO" id="GO:0019563">
    <property type="term" value="P:glycerol catabolic process"/>
    <property type="evidence" value="ECO:0007669"/>
    <property type="project" value="UniProtKB-UniRule"/>
</dbReference>
<dbReference type="GO" id="GO:0006071">
    <property type="term" value="P:glycerol metabolic process"/>
    <property type="evidence" value="ECO:0000250"/>
    <property type="project" value="UniProtKB"/>
</dbReference>
<dbReference type="GO" id="GO:0006072">
    <property type="term" value="P:glycerol-3-phosphate metabolic process"/>
    <property type="evidence" value="ECO:0007669"/>
    <property type="project" value="InterPro"/>
</dbReference>
<dbReference type="CDD" id="cd07786">
    <property type="entry name" value="FGGY_EcGK_like"/>
    <property type="match status" value="1"/>
</dbReference>
<dbReference type="FunFam" id="3.30.420.40:FF:000007">
    <property type="entry name" value="Glycerol kinase"/>
    <property type="match status" value="1"/>
</dbReference>
<dbReference type="FunFam" id="3.30.420.40:FF:000008">
    <property type="entry name" value="Glycerol kinase"/>
    <property type="match status" value="1"/>
</dbReference>
<dbReference type="Gene3D" id="3.30.420.40">
    <property type="match status" value="2"/>
</dbReference>
<dbReference type="HAMAP" id="MF_00186">
    <property type="entry name" value="Glycerol_kin"/>
    <property type="match status" value="1"/>
</dbReference>
<dbReference type="InterPro" id="IPR043129">
    <property type="entry name" value="ATPase_NBD"/>
</dbReference>
<dbReference type="InterPro" id="IPR000577">
    <property type="entry name" value="Carb_kinase_FGGY"/>
</dbReference>
<dbReference type="InterPro" id="IPR018483">
    <property type="entry name" value="Carb_kinase_FGGY_CS"/>
</dbReference>
<dbReference type="InterPro" id="IPR018485">
    <property type="entry name" value="FGGY_C"/>
</dbReference>
<dbReference type="InterPro" id="IPR018484">
    <property type="entry name" value="FGGY_N"/>
</dbReference>
<dbReference type="InterPro" id="IPR005999">
    <property type="entry name" value="Glycerol_kin"/>
</dbReference>
<dbReference type="NCBIfam" id="TIGR01311">
    <property type="entry name" value="glycerol_kin"/>
    <property type="match status" value="1"/>
</dbReference>
<dbReference type="NCBIfam" id="NF000756">
    <property type="entry name" value="PRK00047.1"/>
    <property type="match status" value="1"/>
</dbReference>
<dbReference type="PANTHER" id="PTHR10196:SF69">
    <property type="entry name" value="GLYCEROL KINASE"/>
    <property type="match status" value="1"/>
</dbReference>
<dbReference type="PANTHER" id="PTHR10196">
    <property type="entry name" value="SUGAR KINASE"/>
    <property type="match status" value="1"/>
</dbReference>
<dbReference type="Pfam" id="PF02782">
    <property type="entry name" value="FGGY_C"/>
    <property type="match status" value="1"/>
</dbReference>
<dbReference type="Pfam" id="PF00370">
    <property type="entry name" value="FGGY_N"/>
    <property type="match status" value="1"/>
</dbReference>
<dbReference type="PIRSF" id="PIRSF000538">
    <property type="entry name" value="GlpK"/>
    <property type="match status" value="1"/>
</dbReference>
<dbReference type="SUPFAM" id="SSF53067">
    <property type="entry name" value="Actin-like ATPase domain"/>
    <property type="match status" value="2"/>
</dbReference>
<dbReference type="PROSITE" id="PS00933">
    <property type="entry name" value="FGGY_KINASES_1"/>
    <property type="match status" value="1"/>
</dbReference>
<dbReference type="PROSITE" id="PS00445">
    <property type="entry name" value="FGGY_KINASES_2"/>
    <property type="match status" value="1"/>
</dbReference>
<accession>Q0TAD8</accession>
<sequence length="502" mass="56231">MTEKKYIVALDQGTTSSRAVVMDHDANIISVSQREFEQIYPKPGWVEHDPMEIWATQSSTLVEVLAKADISSDQIAAIGITNQRETTIVWEKETGKPIYNAIVWQCRRTAEICEHLKRDGLEDYIRSNTGLVIDPYFSGTKVKWILDHVEGSRERARRGELLFGTVDTWLIWKMTQGRVHVTDYTNASRTMLFNIHTLDWDDKMLEVLDIPREMLPEVRRSSEVYGQTNIGGKGGTRIPISGIAGDQQAALFGQLCVKEGMAKNTYGTGCFMLMNTGEKAVKSENGLLTTIACGPTGEVNYALEGAVFMAGASIQWLRDEMKLINDAYDSEYFATKVQNTNGVYVVPAFTGLGAPYWDPYARGAIFGLTRGVNANHIIRATLESIAYQTRDVLEAMQADSGIRLHALRVDGGAVANNFLMQFQSDILGTRVERPEVREVTALGAAYLAGLAVGFWQNLDELQEKAVIEREFRPGIETTERNYRYAGWKKAVKRAMAWEEHDE</sequence>
<feature type="chain" id="PRO_1000020730" description="Glycerol kinase">
    <location>
        <begin position="1"/>
        <end position="502"/>
    </location>
</feature>
<feature type="binding site" evidence="1">
    <location>
        <position position="14"/>
    </location>
    <ligand>
        <name>ADP</name>
        <dbReference type="ChEBI" id="CHEBI:456216"/>
    </ligand>
</feature>
<feature type="binding site" evidence="1">
    <location>
        <position position="14"/>
    </location>
    <ligand>
        <name>ATP</name>
        <dbReference type="ChEBI" id="CHEBI:30616"/>
    </ligand>
</feature>
<feature type="binding site" evidence="1">
    <location>
        <position position="14"/>
    </location>
    <ligand>
        <name>sn-glycerol 3-phosphate</name>
        <dbReference type="ChEBI" id="CHEBI:57597"/>
    </ligand>
</feature>
<feature type="binding site" evidence="1">
    <location>
        <position position="15"/>
    </location>
    <ligand>
        <name>ATP</name>
        <dbReference type="ChEBI" id="CHEBI:30616"/>
    </ligand>
</feature>
<feature type="binding site" evidence="1">
    <location>
        <position position="16"/>
    </location>
    <ligand>
        <name>ATP</name>
        <dbReference type="ChEBI" id="CHEBI:30616"/>
    </ligand>
</feature>
<feature type="binding site" evidence="1">
    <location>
        <position position="18"/>
    </location>
    <ligand>
        <name>ADP</name>
        <dbReference type="ChEBI" id="CHEBI:456216"/>
    </ligand>
</feature>
<feature type="binding site" evidence="1">
    <location>
        <position position="84"/>
    </location>
    <ligand>
        <name>glycerol</name>
        <dbReference type="ChEBI" id="CHEBI:17754"/>
    </ligand>
</feature>
<feature type="binding site" evidence="1">
    <location>
        <position position="84"/>
    </location>
    <ligand>
        <name>sn-glycerol 3-phosphate</name>
        <dbReference type="ChEBI" id="CHEBI:57597"/>
    </ligand>
</feature>
<feature type="binding site" evidence="1">
    <location>
        <position position="85"/>
    </location>
    <ligand>
        <name>glycerol</name>
        <dbReference type="ChEBI" id="CHEBI:17754"/>
    </ligand>
</feature>
<feature type="binding site" evidence="1">
    <location>
        <position position="85"/>
    </location>
    <ligand>
        <name>sn-glycerol 3-phosphate</name>
        <dbReference type="ChEBI" id="CHEBI:57597"/>
    </ligand>
</feature>
<feature type="binding site" evidence="1">
    <location>
        <position position="136"/>
    </location>
    <ligand>
        <name>glycerol</name>
        <dbReference type="ChEBI" id="CHEBI:17754"/>
    </ligand>
</feature>
<feature type="binding site" evidence="1">
    <location>
        <position position="136"/>
    </location>
    <ligand>
        <name>sn-glycerol 3-phosphate</name>
        <dbReference type="ChEBI" id="CHEBI:57597"/>
    </ligand>
</feature>
<feature type="binding site" evidence="1">
    <location>
        <position position="246"/>
    </location>
    <ligand>
        <name>glycerol</name>
        <dbReference type="ChEBI" id="CHEBI:17754"/>
    </ligand>
</feature>
<feature type="binding site" evidence="1">
    <location>
        <position position="246"/>
    </location>
    <ligand>
        <name>sn-glycerol 3-phosphate</name>
        <dbReference type="ChEBI" id="CHEBI:57597"/>
    </ligand>
</feature>
<feature type="binding site" evidence="1">
    <location>
        <position position="247"/>
    </location>
    <ligand>
        <name>glycerol</name>
        <dbReference type="ChEBI" id="CHEBI:17754"/>
    </ligand>
</feature>
<feature type="binding site" evidence="1">
    <location>
        <position position="268"/>
    </location>
    <ligand>
        <name>ADP</name>
        <dbReference type="ChEBI" id="CHEBI:456216"/>
    </ligand>
</feature>
<feature type="binding site" evidence="1">
    <location>
        <position position="268"/>
    </location>
    <ligand>
        <name>ATP</name>
        <dbReference type="ChEBI" id="CHEBI:30616"/>
    </ligand>
</feature>
<feature type="binding site" evidence="1">
    <location>
        <position position="311"/>
    </location>
    <ligand>
        <name>ADP</name>
        <dbReference type="ChEBI" id="CHEBI:456216"/>
    </ligand>
</feature>
<feature type="binding site" evidence="1">
    <location>
        <position position="311"/>
    </location>
    <ligand>
        <name>ATP</name>
        <dbReference type="ChEBI" id="CHEBI:30616"/>
    </ligand>
</feature>
<feature type="binding site" evidence="1">
    <location>
        <position position="315"/>
    </location>
    <ligand>
        <name>ATP</name>
        <dbReference type="ChEBI" id="CHEBI:30616"/>
    </ligand>
</feature>
<feature type="binding site" evidence="1">
    <location>
        <position position="412"/>
    </location>
    <ligand>
        <name>ADP</name>
        <dbReference type="ChEBI" id="CHEBI:456216"/>
    </ligand>
</feature>
<feature type="binding site" evidence="1">
    <location>
        <position position="412"/>
    </location>
    <ligand>
        <name>ATP</name>
        <dbReference type="ChEBI" id="CHEBI:30616"/>
    </ligand>
</feature>
<feature type="binding site" evidence="1">
    <location>
        <position position="416"/>
    </location>
    <ligand>
        <name>ADP</name>
        <dbReference type="ChEBI" id="CHEBI:456216"/>
    </ligand>
</feature>
<protein>
    <recommendedName>
        <fullName evidence="1">Glycerol kinase</fullName>
        <ecNumber evidence="1">2.7.1.30</ecNumber>
    </recommendedName>
    <alternativeName>
        <fullName evidence="1">ATP:glycerol 3-phosphotransferase</fullName>
    </alternativeName>
    <alternativeName>
        <fullName evidence="1">Glycerokinase</fullName>
        <shortName evidence="1">GK</shortName>
    </alternativeName>
</protein>
<proteinExistence type="inferred from homology"/>
<organism>
    <name type="scientific">Escherichia coli O6:K15:H31 (strain 536 / UPEC)</name>
    <dbReference type="NCBI Taxonomy" id="362663"/>
    <lineage>
        <taxon>Bacteria</taxon>
        <taxon>Pseudomonadati</taxon>
        <taxon>Pseudomonadota</taxon>
        <taxon>Gammaproteobacteria</taxon>
        <taxon>Enterobacterales</taxon>
        <taxon>Enterobacteriaceae</taxon>
        <taxon>Escherichia</taxon>
    </lineage>
</organism>
<comment type="function">
    <text evidence="1">Key enzyme in the regulation of glycerol uptake and metabolism. Catalyzes the phosphorylation of glycerol to yield sn-glycerol 3-phosphate.</text>
</comment>
<comment type="catalytic activity">
    <reaction evidence="1">
        <text>glycerol + ATP = sn-glycerol 3-phosphate + ADP + H(+)</text>
        <dbReference type="Rhea" id="RHEA:21644"/>
        <dbReference type="ChEBI" id="CHEBI:15378"/>
        <dbReference type="ChEBI" id="CHEBI:17754"/>
        <dbReference type="ChEBI" id="CHEBI:30616"/>
        <dbReference type="ChEBI" id="CHEBI:57597"/>
        <dbReference type="ChEBI" id="CHEBI:456216"/>
        <dbReference type="EC" id="2.7.1.30"/>
    </reaction>
</comment>
<comment type="activity regulation">
    <text evidence="1">Activity of this regulatory enzyme is affected by several metabolites. Allosterically and non-competitively inhibited by fructose 1,6-bisphosphate (FBP) and unphosphorylated phosphocarrier protein EIIA-Glc (III-Glc), an integral component of the bacterial phosphotransferase (PTS) system.</text>
</comment>
<comment type="pathway">
    <text evidence="1">Polyol metabolism; glycerol degradation via glycerol kinase pathway; sn-glycerol 3-phosphate from glycerol: step 1/1.</text>
</comment>
<comment type="subunit">
    <text evidence="1">Homotetramer and homodimer (in equilibrium). Heterodimer with EIIA-Glc. Binds 1 zinc ion per glycerol kinase EIIA-Glc dimer. The zinc ion is important for dimerization.</text>
</comment>
<comment type="similarity">
    <text evidence="1">Belongs to the FGGY kinase family.</text>
</comment>
<keyword id="KW-0021">Allosteric enzyme</keyword>
<keyword id="KW-0067">ATP-binding</keyword>
<keyword id="KW-0319">Glycerol metabolism</keyword>
<keyword id="KW-0418">Kinase</keyword>
<keyword id="KW-0479">Metal-binding</keyword>
<keyword id="KW-0547">Nucleotide-binding</keyword>
<keyword id="KW-0808">Transferase</keyword>
<keyword id="KW-0862">Zinc</keyword>
<name>GLPK_ECOL5</name>
<gene>
    <name evidence="1" type="primary">glpK</name>
    <name type="ordered locus">ECP_4135</name>
</gene>
<evidence type="ECO:0000255" key="1">
    <source>
        <dbReference type="HAMAP-Rule" id="MF_00186"/>
    </source>
</evidence>